<dbReference type="EMBL" id="L14851">
    <property type="protein sequence ID" value="AAA02853.1"/>
    <property type="molecule type" value="mRNA"/>
</dbReference>
<dbReference type="EMBL" id="L14851">
    <property type="protein sequence ID" value="AAA02854.1"/>
    <property type="molecule type" value="mRNA"/>
</dbReference>
<dbReference type="EMBL" id="L14851">
    <property type="protein sequence ID" value="AAA02855.1"/>
    <property type="molecule type" value="mRNA"/>
</dbReference>
<dbReference type="EMBL" id="L14851">
    <property type="protein sequence ID" value="AAA02856.1"/>
    <property type="molecule type" value="mRNA"/>
</dbReference>
<dbReference type="EMBL" id="L14851">
    <property type="protein sequence ID" value="AAA02857.1"/>
    <property type="molecule type" value="mRNA"/>
</dbReference>
<dbReference type="EMBL" id="L14851">
    <property type="protein sequence ID" value="AAA02858.1"/>
    <property type="molecule type" value="mRNA"/>
</dbReference>
<dbReference type="PIR" id="I48216">
    <property type="entry name" value="I48216"/>
</dbReference>
<dbReference type="RefSeq" id="NP_446269.2">
    <property type="nucleotide sequence ID" value="NM_053817.2"/>
</dbReference>
<dbReference type="SMR" id="Q07310"/>
<dbReference type="BioGRID" id="250475">
    <property type="interactions" value="3"/>
</dbReference>
<dbReference type="ELM" id="Q07310"/>
<dbReference type="FunCoup" id="Q07310">
    <property type="interactions" value="2350"/>
</dbReference>
<dbReference type="IntAct" id="Q07310">
    <property type="interactions" value="1"/>
</dbReference>
<dbReference type="MINT" id="Q07310"/>
<dbReference type="STRING" id="10116.ENSRNOP00000060600"/>
<dbReference type="GlyCosmos" id="Q07310">
    <property type="glycosylation" value="7 sites, No reported glycans"/>
</dbReference>
<dbReference type="GlyGen" id="Q07310">
    <property type="glycosylation" value="8 sites"/>
</dbReference>
<dbReference type="iPTMnet" id="Q07310"/>
<dbReference type="PhosphoSitePlus" id="Q07310"/>
<dbReference type="PaxDb" id="10116-ENSRNOP00000060655"/>
<dbReference type="GeneID" id="116508"/>
<dbReference type="KEGG" id="rno:116508"/>
<dbReference type="UCSC" id="RGD:620212">
    <molecule id="Q07310-1"/>
    <property type="organism name" value="rat"/>
</dbReference>
<dbReference type="AGR" id="RGD:620212"/>
<dbReference type="CTD" id="9369"/>
<dbReference type="RGD" id="620212">
    <property type="gene designation" value="Nrxn3"/>
</dbReference>
<dbReference type="eggNOG" id="KOG3514">
    <property type="taxonomic scope" value="Eukaryota"/>
</dbReference>
<dbReference type="InParanoid" id="Q07310"/>
<dbReference type="PhylomeDB" id="Q07310"/>
<dbReference type="Reactome" id="R-RNO-6794361">
    <property type="pathway name" value="Neurexins and neuroligins"/>
</dbReference>
<dbReference type="Proteomes" id="UP000002494">
    <property type="component" value="Unplaced"/>
</dbReference>
<dbReference type="GO" id="GO:0042995">
    <property type="term" value="C:cell projection"/>
    <property type="evidence" value="ECO:0007669"/>
    <property type="project" value="UniProtKB-KW"/>
</dbReference>
<dbReference type="GO" id="GO:0098982">
    <property type="term" value="C:GABA-ergic synapse"/>
    <property type="evidence" value="ECO:0000266"/>
    <property type="project" value="RGD"/>
</dbReference>
<dbReference type="GO" id="GO:0098978">
    <property type="term" value="C:glutamatergic synapse"/>
    <property type="evidence" value="ECO:0000266"/>
    <property type="project" value="RGD"/>
</dbReference>
<dbReference type="GO" id="GO:0048787">
    <property type="term" value="C:presynaptic active zone membrane"/>
    <property type="evidence" value="ECO:0000266"/>
    <property type="project" value="RGD"/>
</dbReference>
<dbReference type="GO" id="GO:0042734">
    <property type="term" value="C:presynaptic membrane"/>
    <property type="evidence" value="ECO:0000266"/>
    <property type="project" value="RGD"/>
</dbReference>
<dbReference type="GO" id="GO:0032991">
    <property type="term" value="C:protein-containing complex"/>
    <property type="evidence" value="ECO:0000266"/>
    <property type="project" value="RGD"/>
</dbReference>
<dbReference type="GO" id="GO:0098820">
    <property type="term" value="C:trans-synaptic protein complex"/>
    <property type="evidence" value="ECO:0000266"/>
    <property type="project" value="RGD"/>
</dbReference>
<dbReference type="GO" id="GO:0005246">
    <property type="term" value="F:calcium channel regulator activity"/>
    <property type="evidence" value="ECO:0000266"/>
    <property type="project" value="RGD"/>
</dbReference>
<dbReference type="GO" id="GO:0046872">
    <property type="term" value="F:metal ion binding"/>
    <property type="evidence" value="ECO:0007669"/>
    <property type="project" value="UniProtKB-KW"/>
</dbReference>
<dbReference type="GO" id="GO:0030534">
    <property type="term" value="P:adult behavior"/>
    <property type="evidence" value="ECO:0000266"/>
    <property type="project" value="RGD"/>
</dbReference>
<dbReference type="GO" id="GO:0007155">
    <property type="term" value="P:cell adhesion"/>
    <property type="evidence" value="ECO:0007669"/>
    <property type="project" value="UniProtKB-KW"/>
</dbReference>
<dbReference type="GO" id="GO:0007268">
    <property type="term" value="P:chemical synaptic transmission"/>
    <property type="evidence" value="ECO:0000266"/>
    <property type="project" value="RGD"/>
</dbReference>
<dbReference type="GO" id="GO:0007612">
    <property type="term" value="P:learning"/>
    <property type="evidence" value="ECO:0000266"/>
    <property type="project" value="RGD"/>
</dbReference>
<dbReference type="GO" id="GO:0099645">
    <property type="term" value="P:neurotransmitter receptor localization to postsynaptic specialization membrane"/>
    <property type="evidence" value="ECO:0000266"/>
    <property type="project" value="RGD"/>
</dbReference>
<dbReference type="GO" id="GO:0007269">
    <property type="term" value="P:neurotransmitter secretion"/>
    <property type="evidence" value="ECO:0000266"/>
    <property type="project" value="RGD"/>
</dbReference>
<dbReference type="GO" id="GO:0097107">
    <property type="term" value="P:postsynaptic density assembly"/>
    <property type="evidence" value="ECO:0000266"/>
    <property type="project" value="RGD"/>
</dbReference>
<dbReference type="GO" id="GO:0099171">
    <property type="term" value="P:presynaptic modulation of chemical synaptic transmission"/>
    <property type="evidence" value="ECO:0000266"/>
    <property type="project" value="RGD"/>
</dbReference>
<dbReference type="GO" id="GO:0099072">
    <property type="term" value="P:regulation of postsynaptic membrane neurotransmitter receptor levels"/>
    <property type="evidence" value="ECO:0000266"/>
    <property type="project" value="RGD"/>
</dbReference>
<dbReference type="GO" id="GO:0035176">
    <property type="term" value="P:social behavior"/>
    <property type="evidence" value="ECO:0000266"/>
    <property type="project" value="RGD"/>
</dbReference>
<dbReference type="GO" id="GO:0007416">
    <property type="term" value="P:synapse assembly"/>
    <property type="evidence" value="ECO:0000266"/>
    <property type="project" value="RGD"/>
</dbReference>
<dbReference type="GO" id="GO:0099537">
    <property type="term" value="P:trans-synaptic signaling"/>
    <property type="evidence" value="ECO:0000266"/>
    <property type="project" value="RGD"/>
</dbReference>
<dbReference type="GO" id="GO:0099550">
    <property type="term" value="P:trans-synaptic signaling, modulating synaptic transmission"/>
    <property type="evidence" value="ECO:0000266"/>
    <property type="project" value="RGD"/>
</dbReference>
<dbReference type="GO" id="GO:0071625">
    <property type="term" value="P:vocalization behavior"/>
    <property type="evidence" value="ECO:0000266"/>
    <property type="project" value="RGD"/>
</dbReference>
<dbReference type="CDD" id="cd00054">
    <property type="entry name" value="EGF_CA"/>
    <property type="match status" value="2"/>
</dbReference>
<dbReference type="CDD" id="cd00110">
    <property type="entry name" value="LamG"/>
    <property type="match status" value="6"/>
</dbReference>
<dbReference type="FunFam" id="2.10.25.10:FF:000015">
    <property type="entry name" value="neurexin-1 isoform X1"/>
    <property type="match status" value="1"/>
</dbReference>
<dbReference type="FunFam" id="2.10.25.10:FF:000029">
    <property type="entry name" value="neurexin-1 isoform X1"/>
    <property type="match status" value="1"/>
</dbReference>
<dbReference type="FunFam" id="2.60.120.200:FF:000003">
    <property type="entry name" value="neurexin-1 isoform X1"/>
    <property type="match status" value="1"/>
</dbReference>
<dbReference type="FunFam" id="2.60.120.200:FF:000004">
    <property type="entry name" value="neurexin-1 isoform X1"/>
    <property type="match status" value="1"/>
</dbReference>
<dbReference type="FunFam" id="2.60.120.200:FF:000005">
    <property type="entry name" value="neurexin-1 isoform X1"/>
    <property type="match status" value="1"/>
</dbReference>
<dbReference type="FunFam" id="2.60.120.200:FF:000007">
    <property type="entry name" value="neurexin-1 isoform X1"/>
    <property type="match status" value="1"/>
</dbReference>
<dbReference type="Gene3D" id="2.60.120.200">
    <property type="match status" value="6"/>
</dbReference>
<dbReference type="Gene3D" id="2.10.25.10">
    <property type="entry name" value="Laminin"/>
    <property type="match status" value="3"/>
</dbReference>
<dbReference type="InterPro" id="IPR013320">
    <property type="entry name" value="ConA-like_dom_sf"/>
</dbReference>
<dbReference type="InterPro" id="IPR000742">
    <property type="entry name" value="EGF-like_dom"/>
</dbReference>
<dbReference type="InterPro" id="IPR000152">
    <property type="entry name" value="EGF-type_Asp/Asn_hydroxyl_site"/>
</dbReference>
<dbReference type="InterPro" id="IPR001791">
    <property type="entry name" value="Laminin_G"/>
</dbReference>
<dbReference type="InterPro" id="IPR003585">
    <property type="entry name" value="Neurexin-like"/>
</dbReference>
<dbReference type="InterPro" id="IPR050372">
    <property type="entry name" value="Neurexin-related_CASP"/>
</dbReference>
<dbReference type="InterPro" id="IPR027789">
    <property type="entry name" value="Syndecan/Neurexin_dom"/>
</dbReference>
<dbReference type="PANTHER" id="PTHR15036">
    <property type="entry name" value="PIKACHURIN-LIKE PROTEIN"/>
    <property type="match status" value="1"/>
</dbReference>
<dbReference type="PANTHER" id="PTHR15036:SF85">
    <property type="entry name" value="SP2353, ISOFORM A"/>
    <property type="match status" value="1"/>
</dbReference>
<dbReference type="Pfam" id="PF02210">
    <property type="entry name" value="Laminin_G_2"/>
    <property type="match status" value="6"/>
</dbReference>
<dbReference type="Pfam" id="PF01034">
    <property type="entry name" value="Syndecan"/>
    <property type="match status" value="1"/>
</dbReference>
<dbReference type="SMART" id="SM00294">
    <property type="entry name" value="4.1m"/>
    <property type="match status" value="1"/>
</dbReference>
<dbReference type="SMART" id="SM00181">
    <property type="entry name" value="EGF"/>
    <property type="match status" value="3"/>
</dbReference>
<dbReference type="SMART" id="SM00282">
    <property type="entry name" value="LamG"/>
    <property type="match status" value="6"/>
</dbReference>
<dbReference type="SUPFAM" id="SSF49899">
    <property type="entry name" value="Concanavalin A-like lectins/glucanases"/>
    <property type="match status" value="6"/>
</dbReference>
<dbReference type="PROSITE" id="PS00010">
    <property type="entry name" value="ASX_HYDROXYL"/>
    <property type="match status" value="1"/>
</dbReference>
<dbReference type="PROSITE" id="PS50026">
    <property type="entry name" value="EGF_3"/>
    <property type="match status" value="3"/>
</dbReference>
<dbReference type="PROSITE" id="PS50025">
    <property type="entry name" value="LAM_G_DOMAIN"/>
    <property type="match status" value="6"/>
</dbReference>
<comment type="function">
    <text evidence="5">Neuronal cell surface protein that may be involved in cell recognition and cell adhesion. May mediate intracellular signaling (By similarity).</text>
</comment>
<comment type="subunit">
    <text evidence="2 10 11 12">The laminin G-like domain 2 binds to NXPH1 (PubMed:9856994). Isoform 8/alpha-4B binds to alpha-dystroglycan (PubMed:11470830). The cytoplasmic C-terminal region binds to CASK (PubMed:8786425). Specific isoforms bind neuroligins NLGN1, NLGN2 and NLGN3 (By similarity). Interacts with CLSTN3 (By similarity).</text>
</comment>
<comment type="subcellular location">
    <subcellularLocation>
        <location evidence="5">Presynaptic cell membrane</location>
        <topology evidence="6">Single-pass type I membrane protein</topology>
    </subcellularLocation>
</comment>
<comment type="alternative products">
    <event type="alternative splicing"/>
    <isoform>
        <id>Q07310-1</id>
        <name>1</name>
        <name>Alpha-5I</name>
        <sequence type="displayed"/>
    </isoform>
    <isoform>
        <id>Q07310-2</id>
        <name>2</name>
        <name>Alpha-1B</name>
        <sequence type="described" ref="VSP_003524"/>
    </isoform>
    <isoform>
        <id>Q07310-3</id>
        <name>3</name>
        <name>Alpha-1C</name>
        <sequence type="described" ref="VSP_003521"/>
    </isoform>
    <isoform>
        <id>Q07310-4</id>
        <name>4</name>
        <name>Alpha-1D</name>
        <sequence type="described" ref="VSP_003521 VSP_003524"/>
    </isoform>
    <isoform>
        <id>Q07310-5</id>
        <name>5</name>
        <name>Alpha-1E</name>
        <sequence type="described" ref="VSP_003523"/>
    </isoform>
    <isoform>
        <id>Q07310-6</id>
        <name>6</name>
        <name>Alpha-1F</name>
        <sequence type="described" ref="VSP_003522"/>
    </isoform>
    <isoform>
        <id>Q07310-7</id>
        <name>7</name>
        <name>Alpha-3B</name>
        <sequence type="described" ref="VSP_003525"/>
    </isoform>
    <isoform>
        <id>Q07310-8</id>
        <name>8</name>
        <name>Alpha-4B</name>
        <sequence type="described" ref="VSP_003526"/>
    </isoform>
    <isoform>
        <id>Q07310-9</id>
        <name>9</name>
        <name>Alpha-5A</name>
        <sequence type="described" ref="VSP_003528 VSP_003529"/>
    </isoform>
    <isoform>
        <id>Q07310-10</id>
        <name>10</name>
        <name>Alpha-5B</name>
        <sequence type="described" ref="VSP_003527 VSP_003528 VSP_003529"/>
    </isoform>
    <isoform>
        <id>Q07310-11</id>
        <name>11</name>
        <name>Alpha-5C</name>
        <sequence type="described" ref="VSP_003528 VSP_003530"/>
    </isoform>
    <isoform>
        <id>Q07310-12</id>
        <name>12</name>
        <name>Alpha-5D</name>
        <sequence type="described" ref="VSP_003527 VSP_003528 VSP_003530"/>
    </isoform>
    <isoform>
        <id>Q07310-13</id>
        <name>13</name>
        <name>Alpha-5E</name>
        <sequence type="described" ref="VSP_003528 VSP_003531"/>
    </isoform>
    <isoform>
        <id>Q07310-14</id>
        <name>14</name>
        <name>Alpha-5F</name>
        <sequence type="described" ref="VSP_003527 VSP_003528 VSP_003531"/>
    </isoform>
    <isoform>
        <id>Q07310-15</id>
        <name>15</name>
        <name>Alpha-5G</name>
        <sequence type="described" ref="VSP_003528 VSP_003532"/>
    </isoform>
    <isoform>
        <id>Q07310-16</id>
        <name>16</name>
        <name>Alpha-5H</name>
        <sequence type="described" ref="VSP_003527 VSP_003528 VSP_003532"/>
    </isoform>
    <isoform>
        <id>Q07310-17</id>
        <name>17</name>
        <name>Alpha-5J</name>
        <sequence type="described" ref="VSP_003527"/>
    </isoform>
    <isoform>
        <id>Q07310-18</id>
        <name>18</name>
        <name>Alpha-5K</name>
        <sequence type="described" ref="VSP_003528"/>
    </isoform>
    <isoform>
        <id>Q07310-19</id>
        <name>19</name>
        <name>Alpha-5L</name>
        <sequence type="described" ref="VSP_003527 VSP_003528"/>
    </isoform>
    <text>There are five major alternatively spliced sites, each of which may be spliced in up to twelve different ways. Combinatorial splicing at each of these five sites may lead to the generation of at least 288 isoforms but for simplicity only individual splice events are explicitly described below. Isoforms Alpha 5A to isoform Alpha 5H lack the transmembrane domain. Experimental confirmation may be lacking for some isoforms.</text>
</comment>
<comment type="tissue specificity">
    <text>Brain.</text>
</comment>
<comment type="PTM">
    <text evidence="3">O-glycosylated; contains heparan sulfate. Heparan sulfate attachment is required for synapse development by mediating interactions with neuroligins.</text>
</comment>
<comment type="similarity">
    <text evidence="13">Belongs to the neurexin family.</text>
</comment>
<reference key="1">
    <citation type="journal article" date="1993" name="Proc. Natl. Acad. Sci. U.S.A.">
        <title>Neurexin III alpha: extensive alternative splicing generates membrane-bound and soluble forms.</title>
        <authorList>
            <person name="Ushkaryov Y.A."/>
            <person name="Suedhof T.C."/>
        </authorList>
    </citation>
    <scope>NUCLEOTIDE SEQUENCE [MRNA]</scope>
    <scope>ALTERNATIVE SPLICING</scope>
    <source>
        <strain>Sprague-Dawley</strain>
        <tissue>Brain</tissue>
    </source>
</reference>
<reference key="2">
    <citation type="journal article" date="1995" name="Neuron">
        <title>Cartography of neurexins: more than 1000 isoforms generated by alternative splicing and expressed in distinct subsets of neurons.</title>
        <authorList>
            <person name="Ullrich B."/>
            <person name="Ushkaryov Y.A."/>
            <person name="Suedhof T.C."/>
        </authorList>
    </citation>
    <scope>NUCLEOTIDE SEQUENCE [MRNA]</scope>
    <scope>ALTERNATIVE SPLICING</scope>
    <source>
        <tissue>Brain</tissue>
    </source>
</reference>
<reference key="3">
    <citation type="journal article" date="1998" name="J. Biol. Chem.">
        <title>Neurexophilin binding to alpha-neurexins. A single LNS domain functions as an independently folding ligand-binding unit.</title>
        <authorList>
            <person name="Missler M."/>
            <person name="Hammer R.E."/>
            <person name="Suedhof T.C."/>
        </authorList>
    </citation>
    <scope>PROTEIN SEQUENCE OF N-TERMINUS</scope>
    <scope>INTERACTION WITH NXPH1</scope>
</reference>
<reference key="4">
    <citation type="journal article" date="1996" name="J. Neurosci.">
        <title>CASK: a novel dlg/PSD95 homolog with an N-terminal calmodulin-dependent protein kinase domain identified by interaction with neurexins.</title>
        <authorList>
            <person name="Hata Y."/>
            <person name="Butz S."/>
            <person name="Suedhof T.C."/>
        </authorList>
    </citation>
    <scope>INTERACTION WITH CASK</scope>
</reference>
<reference key="5">
    <citation type="journal article" date="2001" name="J. Cell Biol.">
        <title>A stoichiometric complex of neurexins and dystroglycan in brain.</title>
        <authorList>
            <person name="Sugita S."/>
            <person name="Saito F."/>
            <person name="Tang J."/>
            <person name="Satz J."/>
            <person name="Campbell K."/>
            <person name="Suedhof T.C."/>
        </authorList>
    </citation>
    <scope>INTERACTION WITH ALPHA-DYSTROGLYCAN</scope>
</reference>
<accession>Q07310</accession>
<accession>Q07280</accession>
<accession>Q07311</accession>
<accession>Q07312</accession>
<accession>Q07313</accession>
<accession>Q07314</accession>
<organism>
    <name type="scientific">Rattus norvegicus</name>
    <name type="common">Rat</name>
    <dbReference type="NCBI Taxonomy" id="10116"/>
    <lineage>
        <taxon>Eukaryota</taxon>
        <taxon>Metazoa</taxon>
        <taxon>Chordata</taxon>
        <taxon>Craniata</taxon>
        <taxon>Vertebrata</taxon>
        <taxon>Euteleostomi</taxon>
        <taxon>Mammalia</taxon>
        <taxon>Eutheria</taxon>
        <taxon>Euarchontoglires</taxon>
        <taxon>Glires</taxon>
        <taxon>Rodentia</taxon>
        <taxon>Myomorpha</taxon>
        <taxon>Muroidea</taxon>
        <taxon>Muridae</taxon>
        <taxon>Murinae</taxon>
        <taxon>Rattus</taxon>
    </lineage>
</organism>
<evidence type="ECO:0000250" key="1">
    <source>
        <dbReference type="UniProtKB" id="Q28146"/>
    </source>
</evidence>
<evidence type="ECO:0000250" key="2">
    <source>
        <dbReference type="UniProtKB" id="Q63376"/>
    </source>
</evidence>
<evidence type="ECO:0000250" key="3">
    <source>
        <dbReference type="UniProtKB" id="Q6P9K9"/>
    </source>
</evidence>
<evidence type="ECO:0000250" key="4">
    <source>
        <dbReference type="UniProtKB" id="Q8C985"/>
    </source>
</evidence>
<evidence type="ECO:0000250" key="5">
    <source>
        <dbReference type="UniProtKB" id="Q9CS84"/>
    </source>
</evidence>
<evidence type="ECO:0000255" key="6"/>
<evidence type="ECO:0000255" key="7">
    <source>
        <dbReference type="PROSITE-ProRule" id="PRU00076"/>
    </source>
</evidence>
<evidence type="ECO:0000255" key="8">
    <source>
        <dbReference type="PROSITE-ProRule" id="PRU00122"/>
    </source>
</evidence>
<evidence type="ECO:0000256" key="9">
    <source>
        <dbReference type="SAM" id="MobiDB-lite"/>
    </source>
</evidence>
<evidence type="ECO:0000269" key="10">
    <source>
    </source>
</evidence>
<evidence type="ECO:0000269" key="11">
    <source>
    </source>
</evidence>
<evidence type="ECO:0000269" key="12">
    <source>
    </source>
</evidence>
<evidence type="ECO:0000305" key="13"/>
<sequence>MSFTLHSVFFTLKVSSFLGSLVGLCLGLEFMGLPNQWARYLRWDASTRSDLSFQFKTNVSTGLLLYLDDGGVCDFLCLSLVDGRVQLRFSMDCAETTVLSNKQVNDSSWHFLMVSRDRVRTGLVIDGEGQSGELRAQRPYMDVVSDLFLGGGPADIRPSALTLDGVQNMPGFKGLMLDLKYGNSEPRLLGSQSVQLEAEGPCGERPCENGGICFLLDGHPTCDCSTTGYGGTLCSEDVSQGPGLSHLMMSEQGRSKAREENVATFRGSEYLSYDLSQNPIQSSSSEITLSFKTWQRNGLILHTGKSADYVNLALKDGAVSLVINLGSGAFEAIVEPVNGKFNDNAWHDVKVTRNLRQVTISVDGILTTTGYTQEDYTMLGSDDSSYVGPSPSTADLPGSPVSNNFMGCLKEVVYKNNDIRLELSRLARIGATKMKIYGEVVFKCENVATLDPINFETPEAYISLPKWNTKRMGSISFDFRTTEPNGLILLTHGKPQERKDVRSQKNTKVDFFAVELLDGNLYLLLDMGSGTIKVKATQKKANDGEWYHVDIQRDGRSGTISVNSRRTPFTASGQSEILDLEGDMYLGGLPENRAGLILPTELWTAMLNYGYVGCIRDLFIDGRSKNIRQLAEMQNAAGVKSSCSRMSAKQCDSYPCKNNAVCKDGWNRFICDCTGTGYWGRTCEREASILSYDGSMYMKVIMPMVMHTEAEDVSFRFMSQRAYGLLVATTSRDSADTLRLELDGGRVKLMVNLDCIRINCNSSKGPETLYAGQKLNDNEWHTVRVVRRGKSLKLTVDDDVAEGTMVGDHTRLEFHNIETGIMTEKRYISVVPSSFIGHLQSLMFNGLLYIDLCKNGDIDYCELKARFGLRNIIADPVTFKTKSSYLTLATLQAYTSMHLFFQFKTTSADGFILFNSGDGNNFIAVELVKGYIHYVFDLGNGPNVIKGNSDRPLNDNQWHNVVITRDNSNTHSLKVDTKVVTQVINGAKNLDLKGDLYMAGLAQGMYSNLPKLVASRDGFQGCLASVDLNGRLPDLINDALHRSGQIDRGCEGPSTTCQEDSCANQGVCMQQWEGFTCDCSMTSYSGNQCNDPGATYIFGKSGGLILYTWPANDRPSTRSDRLAVGFSTTVKDGVLVRIDSAPGLGDFLQLHIEQGKIGVVFNIGTVDISIKEERTPVNDGKYHVVRFTRNGANATLQVDNWPVNEHYPTGNTDNERRQMVKQKIPFKYNRPVEEWLQEKGRQLTIFNTQAQIAIGGKDKGRLFQGQLSGLYYDGLKVLNMAAENNPNIKINGSVRLVGEVPSVSGTTHTTSMPPEMSTTVMETTTTMATTTTRKNRSTASIQPTSDDLVSSAECSSDDEDFVECEPSTGRSDKSLSTSIFEGGYKAHAPKWESKDFRPNKVSETSRTTTTSLSPELIRFTASSSSGMVPKLPAGKMNNRDLKPQPDIVLLPLPTAYELDSTKLKSPLITCPMFRNVPTANPTEPGIRRVPGASEVIRESNSTTGMVVGIVAAAALCILILLYAMYKYRNRDEGSYQVDETRNYISNSAQSNGTLMKEKQASSKSGHKKQKNKDKEYYV</sequence>
<proteinExistence type="evidence at protein level"/>
<protein>
    <recommendedName>
        <fullName>Neurexin-3</fullName>
    </recommendedName>
    <alternativeName>
        <fullName>Neurexin III-alpha</fullName>
    </alternativeName>
    <alternativeName>
        <fullName>Neurexin-3-alpha</fullName>
    </alternativeName>
</protein>
<feature type="signal peptide" evidence="12">
    <location>
        <begin position="1"/>
        <end position="27"/>
    </location>
</feature>
<feature type="chain" id="PRO_0000019500" description="Neurexin-3">
    <location>
        <begin position="28"/>
        <end position="1578"/>
    </location>
</feature>
<feature type="topological domain" description="Extracellular" evidence="6">
    <location>
        <begin position="28"/>
        <end position="1503"/>
    </location>
</feature>
<feature type="transmembrane region" description="Helical" evidence="6">
    <location>
        <begin position="1504"/>
        <end position="1524"/>
    </location>
</feature>
<feature type="topological domain" description="Cytoplasmic" evidence="6">
    <location>
        <begin position="1525"/>
        <end position="1578"/>
    </location>
</feature>
<feature type="domain" description="Laminin G-like 1" evidence="8">
    <location>
        <begin position="28"/>
        <end position="202"/>
    </location>
</feature>
<feature type="domain" description="EGF-like 1" evidence="7">
    <location>
        <begin position="198"/>
        <end position="235"/>
    </location>
</feature>
<feature type="domain" description="Laminin G-like 2" evidence="8">
    <location>
        <begin position="260"/>
        <end position="444"/>
    </location>
</feature>
<feature type="domain" description="Laminin G-like 3" evidence="8">
    <location>
        <begin position="451"/>
        <end position="643"/>
    </location>
</feature>
<feature type="domain" description="EGF-like 2" evidence="7">
    <location>
        <begin position="647"/>
        <end position="684"/>
    </location>
</feature>
<feature type="domain" description="Laminin G-like 4" evidence="8">
    <location>
        <begin position="689"/>
        <end position="861"/>
    </location>
</feature>
<feature type="domain" description="Laminin G-like 5" evidence="8">
    <location>
        <begin position="875"/>
        <end position="1050"/>
    </location>
</feature>
<feature type="domain" description="EGF-like 3" evidence="7">
    <location>
        <begin position="1053"/>
        <end position="1090"/>
    </location>
</feature>
<feature type="domain" description="Laminin G-like 6" evidence="8">
    <location>
        <begin position="1094"/>
        <end position="1294"/>
    </location>
</feature>
<feature type="region of interest" description="Disordered" evidence="9">
    <location>
        <begin position="1328"/>
        <end position="1352"/>
    </location>
</feature>
<feature type="region of interest" description="Disordered" evidence="9">
    <location>
        <begin position="1546"/>
        <end position="1578"/>
    </location>
</feature>
<feature type="compositionally biased region" description="Polar residues" evidence="9">
    <location>
        <begin position="1337"/>
        <end position="1352"/>
    </location>
</feature>
<feature type="binding site" evidence="1">
    <location>
        <position position="308"/>
    </location>
    <ligand>
        <name>Ca(2+)</name>
        <dbReference type="ChEBI" id="CHEBI:29108"/>
        <label>1</label>
    </ligand>
</feature>
<feature type="binding site" evidence="1">
    <location>
        <position position="325"/>
    </location>
    <ligand>
        <name>Ca(2+)</name>
        <dbReference type="ChEBI" id="CHEBI:29108"/>
        <label>1</label>
    </ligand>
</feature>
<feature type="binding site" evidence="1">
    <location>
        <position position="378"/>
    </location>
    <ligand>
        <name>Ca(2+)</name>
        <dbReference type="ChEBI" id="CHEBI:29108"/>
        <label>1</label>
    </ligand>
</feature>
<feature type="binding site" evidence="1">
    <location>
        <position position="736"/>
    </location>
    <ligand>
        <name>Ca(2+)</name>
        <dbReference type="ChEBI" id="CHEBI:29108"/>
        <label>2</label>
    </ligand>
</feature>
<feature type="binding site" evidence="1">
    <location>
        <position position="753"/>
    </location>
    <ligand>
        <name>Ca(2+)</name>
        <dbReference type="ChEBI" id="CHEBI:29108"/>
        <label>2</label>
    </ligand>
</feature>
<feature type="binding site" evidence="1">
    <location>
        <position position="811"/>
    </location>
    <ligand>
        <name>Ca(2+)</name>
        <dbReference type="ChEBI" id="CHEBI:29108"/>
        <label>2</label>
    </ligand>
</feature>
<feature type="binding site" evidence="5">
    <location>
        <position position="1146"/>
    </location>
    <ligand>
        <name>Ca(2+)</name>
        <dbReference type="ChEBI" id="CHEBI:29108"/>
        <label>3</label>
    </ligand>
</feature>
<feature type="binding site" evidence="5">
    <location>
        <position position="1163"/>
    </location>
    <ligand>
        <name>Ca(2+)</name>
        <dbReference type="ChEBI" id="CHEBI:29108"/>
        <label>3</label>
    </ligand>
</feature>
<feature type="binding site" evidence="5">
    <location>
        <position position="1245"/>
    </location>
    <ligand>
        <name>Ca(2+)</name>
        <dbReference type="ChEBI" id="CHEBI:29108"/>
        <label>3</label>
    </ligand>
</feature>
<feature type="binding site" evidence="5">
    <location>
        <position position="1247"/>
    </location>
    <ligand>
        <name>Ca(2+)</name>
        <dbReference type="ChEBI" id="CHEBI:29108"/>
        <label>3</label>
    </ligand>
</feature>
<feature type="glycosylation site" description="N-linked (GlcNAc...) asparagine" evidence="6">
    <location>
        <position position="58"/>
    </location>
</feature>
<feature type="glycosylation site" description="N-linked (GlcNAc...) asparagine" evidence="6">
    <location>
        <position position="105"/>
    </location>
</feature>
<feature type="glycosylation site" description="N-linked (GlcNAc...) asparagine" evidence="6">
    <location>
        <position position="761"/>
    </location>
</feature>
<feature type="glycosylation site" description="N-linked (GlcNAc...) asparagine" evidence="6">
    <location>
        <position position="1193"/>
    </location>
</feature>
<feature type="glycosylation site" description="N-linked (GlcNAc...) asparagine" evidence="6">
    <location>
        <position position="1291"/>
    </location>
</feature>
<feature type="glycosylation site" description="N-linked (GlcNAc...) asparagine" evidence="6">
    <location>
        <position position="1335"/>
    </location>
</feature>
<feature type="glycosylation site" description="O-linked (Xyl...) (heparan sulfate) serine" evidence="4">
    <location>
        <position position="1351"/>
    </location>
</feature>
<feature type="glycosylation site" description="N-linked (GlcNAc...) asparagine" evidence="6">
    <location>
        <position position="1500"/>
    </location>
</feature>
<feature type="disulfide bond" evidence="7">
    <location>
        <begin position="202"/>
        <end position="213"/>
    </location>
</feature>
<feature type="disulfide bond" evidence="7">
    <location>
        <begin position="207"/>
        <end position="222"/>
    </location>
</feature>
<feature type="disulfide bond" evidence="7">
    <location>
        <begin position="224"/>
        <end position="234"/>
    </location>
</feature>
<feature type="disulfide bond" evidence="8">
    <location>
        <begin position="408"/>
        <end position="444"/>
    </location>
</feature>
<feature type="disulfide bond" evidence="8">
    <location>
        <begin position="614"/>
        <end position="643"/>
    </location>
</feature>
<feature type="disulfide bond" evidence="7">
    <location>
        <begin position="651"/>
        <end position="662"/>
    </location>
</feature>
<feature type="disulfide bond" evidence="7">
    <location>
        <begin position="656"/>
        <end position="671"/>
    </location>
</feature>
<feature type="disulfide bond" evidence="7">
    <location>
        <begin position="673"/>
        <end position="683"/>
    </location>
</feature>
<feature type="disulfide bond" evidence="8">
    <location>
        <begin position="1022"/>
        <end position="1050"/>
    </location>
</feature>
<feature type="disulfide bond" evidence="7">
    <location>
        <begin position="1057"/>
        <end position="1068"/>
    </location>
</feature>
<feature type="disulfide bond" evidence="7">
    <location>
        <begin position="1062"/>
        <end position="1077"/>
    </location>
</feature>
<feature type="disulfide bond" evidence="7">
    <location>
        <begin position="1079"/>
        <end position="1089"/>
    </location>
</feature>
<feature type="splice variant" id="VSP_003522" description="In isoform 6." evidence="13">
    <location>
        <begin position="237"/>
        <end position="256"/>
    </location>
</feature>
<feature type="splice variant" id="VSP_003521" description="In isoform 3 and isoform 4." evidence="13">
    <location>
        <begin position="237"/>
        <end position="242"/>
    </location>
</feature>
<feature type="splice variant" id="VSP_003523" description="In isoform 5." evidence="13">
    <location>
        <begin position="243"/>
        <end position="256"/>
    </location>
</feature>
<feature type="splice variant" id="VSP_003524" description="In isoform 2 and isoform 4." evidence="13">
    <location>
        <begin position="253"/>
        <end position="256"/>
    </location>
</feature>
<feature type="splice variant" id="VSP_003525" description="In isoform 7." evidence="13">
    <original>DCIRINCNSS</original>
    <variation>G</variation>
    <location>
        <begin position="754"/>
        <end position="763"/>
    </location>
</feature>
<feature type="splice variant" id="VSP_003526" description="In isoform 8." evidence="13">
    <location>
        <begin position="1210"/>
        <end position="1239"/>
    </location>
</feature>
<feature type="splice variant" id="VSP_003527" description="In isoform 10, isoform 12, isoform 14, isoform 16, isoform 17 and isoform 19." evidence="13">
    <location>
        <begin position="1369"/>
        <end position="1371"/>
    </location>
</feature>
<feature type="splice variant" id="VSP_003528" description="In isoform 9, isoform 10, isoform 11, isoform 12, isoform 13, isoform 14, isoform 15, isoform 16, isoform 18 and isoform 19." evidence="13">
    <location>
        <begin position="1372"/>
        <end position="1478"/>
    </location>
</feature>
<feature type="splice variant" id="VSP_003530" description="In isoform 11 and isoform 12." evidence="13">
    <original>ANPTEPGIRRVPGASEVIRESNSTTGMVVGIVAAAALCILILLYAMYKYRNRDEGSYQVDETRNYISNSAQSNGTLMKEKQASSKSGHKKQKNKDKEYYV</original>
    <variation>VLERRIILNLKTNAHPKSLQSKTC</variation>
    <location>
        <begin position="1479"/>
        <end position="1578"/>
    </location>
</feature>
<feature type="splice variant" id="VSP_003531" description="In isoform 13 and isoform 14." evidence="13">
    <original>ANPTEPGIRRVPGASEVIRESNSTTGMVVGIVAAAALCILILLYAMYKYRNRDEGSYQVDETRNYISNSAQSNGTLMKEKQASSKSGHKKQKNKDKEYYV</original>
    <variation>DILLKSF</variation>
    <location>
        <begin position="1479"/>
        <end position="1578"/>
    </location>
</feature>
<feature type="splice variant" id="VSP_003532" description="In isoform 15 and isoform 16." evidence="13">
    <original>ANPTEPGIRRVPGASEVIRESNSTTGMVVGIVAAAALCILILLYAMYKYRNRDEGSYQVDETRNYISNSAQSNGTLMKEKQASSKSGHKKQKNKDKEYYV</original>
    <variation>ATTTTKKSNFQECGNSICPRAFLHNFLL</variation>
    <location>
        <begin position="1479"/>
        <end position="1578"/>
    </location>
</feature>
<feature type="splice variant" id="VSP_003529" description="In isoform 9 and isoform 10." evidence="13">
    <original>ANPTEPGIRRVPGASEVIRESNSTTGMVVGIVAAAALCILILLYAMYKYRNRDEGSYQVDETRNYISNSAQSNGTLMKEKQASSKSGHKKQKNKDKEYYV</original>
    <variation>ARSSNAARITPCRPYMDMATHLHIYPSHLHLLCSTLIDTPLPFPHPFFPMLPPSLALLKFMCCHPPP</variation>
    <location>
        <begin position="1479"/>
        <end position="1578"/>
    </location>
</feature>
<name>NRX3A_RAT</name>
<keyword id="KW-0025">Alternative splicing</keyword>
<keyword id="KW-0106">Calcium</keyword>
<keyword id="KW-0130">Cell adhesion</keyword>
<keyword id="KW-1003">Cell membrane</keyword>
<keyword id="KW-0966">Cell projection</keyword>
<keyword id="KW-0903">Direct protein sequencing</keyword>
<keyword id="KW-1015">Disulfide bond</keyword>
<keyword id="KW-0245">EGF-like domain</keyword>
<keyword id="KW-0325">Glycoprotein</keyword>
<keyword id="KW-0357">Heparan sulfate</keyword>
<keyword id="KW-0472">Membrane</keyword>
<keyword id="KW-0479">Metal-binding</keyword>
<keyword id="KW-0654">Proteoglycan</keyword>
<keyword id="KW-1185">Reference proteome</keyword>
<keyword id="KW-0677">Repeat</keyword>
<keyword id="KW-0732">Signal</keyword>
<keyword id="KW-0770">Synapse</keyword>
<keyword id="KW-0812">Transmembrane</keyword>
<keyword id="KW-1133">Transmembrane helix</keyword>
<gene>
    <name type="primary">Nrxn3</name>
</gene>